<name>Y1697_HAEI8</name>
<evidence type="ECO:0000255" key="1">
    <source>
        <dbReference type="HAMAP-Rule" id="MF_00507"/>
    </source>
</evidence>
<protein>
    <recommendedName>
        <fullName evidence="1">UPF0181 protein NTHI1697</fullName>
    </recommendedName>
</protein>
<comment type="similarity">
    <text evidence="1">Belongs to the UPF0181 family.</text>
</comment>
<proteinExistence type="inferred from homology"/>
<feature type="chain" id="PRO_0000236629" description="UPF0181 protein NTHI1697">
    <location>
        <begin position="1"/>
        <end position="52"/>
    </location>
</feature>
<reference key="1">
    <citation type="journal article" date="2005" name="J. Bacteriol.">
        <title>Genomic sequence of an otitis media isolate of nontypeable Haemophilus influenzae: comparative study with H. influenzae serotype d, strain KW20.</title>
        <authorList>
            <person name="Harrison A."/>
            <person name="Dyer D.W."/>
            <person name="Gillaspy A."/>
            <person name="Ray W.C."/>
            <person name="Mungur R."/>
            <person name="Carson M.B."/>
            <person name="Zhong H."/>
            <person name="Gipson J."/>
            <person name="Gipson M."/>
            <person name="Johnson L.S."/>
            <person name="Lewis L."/>
            <person name="Bakaletz L.O."/>
            <person name="Munson R.S. Jr."/>
        </authorList>
    </citation>
    <scope>NUCLEOTIDE SEQUENCE [LARGE SCALE GENOMIC DNA]</scope>
    <source>
        <strain>86-028NP</strain>
    </source>
</reference>
<sequence>MFDINLTHEQQQKAVEQIQELMAKGISSGEAIQIVAKALREIHKNDKKTPDN</sequence>
<gene>
    <name type="ordered locus">NTHI1697</name>
</gene>
<organism>
    <name type="scientific">Haemophilus influenzae (strain 86-028NP)</name>
    <dbReference type="NCBI Taxonomy" id="281310"/>
    <lineage>
        <taxon>Bacteria</taxon>
        <taxon>Pseudomonadati</taxon>
        <taxon>Pseudomonadota</taxon>
        <taxon>Gammaproteobacteria</taxon>
        <taxon>Pasteurellales</taxon>
        <taxon>Pasteurellaceae</taxon>
        <taxon>Haemophilus</taxon>
    </lineage>
</organism>
<dbReference type="EMBL" id="CP000057">
    <property type="protein sequence ID" value="AAX88487.1"/>
    <property type="molecule type" value="Genomic_DNA"/>
</dbReference>
<dbReference type="RefSeq" id="WP_005656618.1">
    <property type="nucleotide sequence ID" value="NC_007146.2"/>
</dbReference>
<dbReference type="SMR" id="Q4QKG0"/>
<dbReference type="KEGG" id="hit:NTHI1697"/>
<dbReference type="HOGENOM" id="CLU_185263_1_1_6"/>
<dbReference type="Proteomes" id="UP000002525">
    <property type="component" value="Chromosome"/>
</dbReference>
<dbReference type="HAMAP" id="MF_00507">
    <property type="entry name" value="UPF0181"/>
    <property type="match status" value="1"/>
</dbReference>
<dbReference type="InterPro" id="IPR005371">
    <property type="entry name" value="UPF0181"/>
</dbReference>
<dbReference type="NCBIfam" id="NF003476">
    <property type="entry name" value="PRK05114.1"/>
    <property type="match status" value="1"/>
</dbReference>
<dbReference type="Pfam" id="PF03701">
    <property type="entry name" value="UPF0181"/>
    <property type="match status" value="1"/>
</dbReference>
<accession>Q4QKG0</accession>